<feature type="chain" id="PRO_0000169923" description="Citrate synthase">
    <location>
        <begin position="1"/>
        <end position="436"/>
    </location>
</feature>
<feature type="active site" evidence="1">
    <location>
        <position position="313"/>
    </location>
</feature>
<feature type="active site" evidence="1">
    <location>
        <position position="371"/>
    </location>
</feature>
<feature type="strand" evidence="3">
    <location>
        <begin position="12"/>
        <end position="17"/>
    </location>
</feature>
<feature type="strand" evidence="3">
    <location>
        <begin position="20"/>
        <end position="27"/>
    </location>
</feature>
<feature type="strand" evidence="3">
    <location>
        <begin position="30"/>
        <end position="32"/>
    </location>
</feature>
<feature type="strand" evidence="3">
    <location>
        <begin position="35"/>
        <end position="37"/>
    </location>
</feature>
<feature type="helix" evidence="3">
    <location>
        <begin position="41"/>
        <end position="45"/>
    </location>
</feature>
<feature type="strand" evidence="3">
    <location>
        <begin position="48"/>
        <end position="50"/>
    </location>
</feature>
<feature type="strand" evidence="3">
    <location>
        <begin position="57"/>
        <end position="68"/>
    </location>
</feature>
<feature type="turn" evidence="3">
    <location>
        <begin position="69"/>
        <end position="72"/>
    </location>
</feature>
<feature type="strand" evidence="3">
    <location>
        <begin position="73"/>
        <end position="76"/>
    </location>
</feature>
<feature type="helix" evidence="3">
    <location>
        <begin position="81"/>
        <end position="87"/>
    </location>
</feature>
<feature type="helix" evidence="3">
    <location>
        <begin position="90"/>
        <end position="99"/>
    </location>
</feature>
<feature type="helix" evidence="3">
    <location>
        <begin position="105"/>
        <end position="116"/>
    </location>
</feature>
<feature type="helix" evidence="3">
    <location>
        <begin position="123"/>
        <end position="125"/>
    </location>
</feature>
<feature type="helix" evidence="3">
    <location>
        <begin position="126"/>
        <end position="129"/>
    </location>
</feature>
<feature type="helix" evidence="3">
    <location>
        <begin position="138"/>
        <end position="149"/>
    </location>
</feature>
<feature type="helix" evidence="3">
    <location>
        <begin position="150"/>
        <end position="152"/>
    </location>
</feature>
<feature type="helix" evidence="3">
    <location>
        <begin position="155"/>
        <end position="158"/>
    </location>
</feature>
<feature type="helix" evidence="3">
    <location>
        <begin position="165"/>
        <end position="188"/>
    </location>
</feature>
<feature type="helix" evidence="3">
    <location>
        <begin position="201"/>
        <end position="210"/>
    </location>
</feature>
<feature type="helix" evidence="3">
    <location>
        <begin position="221"/>
        <end position="234"/>
    </location>
</feature>
<feature type="helix" evidence="3">
    <location>
        <begin position="241"/>
        <end position="250"/>
    </location>
</feature>
<feature type="turn" evidence="3">
    <location>
        <begin position="251"/>
        <end position="253"/>
    </location>
</feature>
<feature type="helix" evidence="3">
    <location>
        <begin position="256"/>
        <end position="268"/>
    </location>
</feature>
<feature type="turn" evidence="3">
    <location>
        <begin position="270"/>
        <end position="274"/>
    </location>
</feature>
<feature type="helix" evidence="3">
    <location>
        <begin position="275"/>
        <end position="286"/>
    </location>
</feature>
<feature type="helix" evidence="3">
    <location>
        <begin position="289"/>
        <end position="291"/>
    </location>
</feature>
<feature type="helix" evidence="3">
    <location>
        <begin position="292"/>
        <end position="300"/>
    </location>
</feature>
<feature type="helix" evidence="3">
    <location>
        <begin position="321"/>
        <end position="336"/>
    </location>
</feature>
<feature type="helix" evidence="3">
    <location>
        <begin position="343"/>
        <end position="357"/>
    </location>
</feature>
<feature type="helix" evidence="3">
    <location>
        <begin position="359"/>
        <end position="363"/>
    </location>
</feature>
<feature type="helix" evidence="3">
    <location>
        <begin position="371"/>
        <end position="380"/>
    </location>
</feature>
<feature type="helix" evidence="3">
    <location>
        <begin position="385"/>
        <end position="387"/>
    </location>
</feature>
<feature type="helix" evidence="3">
    <location>
        <begin position="388"/>
        <end position="409"/>
    </location>
</feature>
<feature type="strand" evidence="3">
    <location>
        <begin position="419"/>
        <end position="422"/>
    </location>
</feature>
<feature type="helix" evidence="3">
    <location>
        <begin position="433"/>
        <end position="435"/>
    </location>
</feature>
<name>CISY_ACEAC</name>
<organism>
    <name type="scientific">Acetobacter aceti</name>
    <dbReference type="NCBI Taxonomy" id="435"/>
    <lineage>
        <taxon>Bacteria</taxon>
        <taxon>Pseudomonadati</taxon>
        <taxon>Pseudomonadota</taxon>
        <taxon>Alphaproteobacteria</taxon>
        <taxon>Acetobacterales</taxon>
        <taxon>Acetobacteraceae</taxon>
        <taxon>Acetobacter</taxon>
        <taxon>Acetobacter subgen. Acetobacter</taxon>
    </lineage>
</organism>
<dbReference type="EC" id="2.3.3.16"/>
<dbReference type="EMBL" id="M34830">
    <property type="protein sequence ID" value="AAA21883.1"/>
    <property type="molecule type" value="Genomic_DNA"/>
</dbReference>
<dbReference type="PIR" id="A35157">
    <property type="entry name" value="YKQPC"/>
</dbReference>
<dbReference type="PDB" id="2H12">
    <property type="method" value="X-ray"/>
    <property type="resolution" value="1.85 A"/>
    <property type="chains" value="A/B/C/D/E/F=1-436"/>
</dbReference>
<dbReference type="PDBsum" id="2H12"/>
<dbReference type="SMR" id="P20901"/>
<dbReference type="STRING" id="435.A0U92_09010"/>
<dbReference type="BioCyc" id="MetaCyc:MONOMER-17983"/>
<dbReference type="BRENDA" id="2.3.3.16">
    <property type="organism ID" value="33"/>
</dbReference>
<dbReference type="UniPathway" id="UPA00223">
    <property type="reaction ID" value="UER00717"/>
</dbReference>
<dbReference type="EvolutionaryTrace" id="P20901"/>
<dbReference type="GO" id="GO:0005737">
    <property type="term" value="C:cytoplasm"/>
    <property type="evidence" value="ECO:0007669"/>
    <property type="project" value="InterPro"/>
</dbReference>
<dbReference type="GO" id="GO:0004108">
    <property type="term" value="F:citrate (Si)-synthase activity"/>
    <property type="evidence" value="ECO:0007669"/>
    <property type="project" value="InterPro"/>
</dbReference>
<dbReference type="GO" id="GO:0006099">
    <property type="term" value="P:tricarboxylic acid cycle"/>
    <property type="evidence" value="ECO:0007669"/>
    <property type="project" value="UniProtKB-UniPathway"/>
</dbReference>
<dbReference type="CDD" id="cd06114">
    <property type="entry name" value="EcCS_like"/>
    <property type="match status" value="1"/>
</dbReference>
<dbReference type="FunFam" id="1.10.230.10:FF:000002">
    <property type="entry name" value="Citrate synthase"/>
    <property type="match status" value="1"/>
</dbReference>
<dbReference type="Gene3D" id="2.20.28.60">
    <property type="match status" value="1"/>
</dbReference>
<dbReference type="Gene3D" id="1.10.580.10">
    <property type="entry name" value="Citrate Synthase, domain 1"/>
    <property type="match status" value="1"/>
</dbReference>
<dbReference type="Gene3D" id="1.10.230.10">
    <property type="entry name" value="Cytochrome P450-Terp, domain 2"/>
    <property type="match status" value="1"/>
</dbReference>
<dbReference type="InterPro" id="IPR016142">
    <property type="entry name" value="Citrate_synth-like_lrg_a-sub"/>
</dbReference>
<dbReference type="InterPro" id="IPR016143">
    <property type="entry name" value="Citrate_synth-like_sm_a-sub"/>
</dbReference>
<dbReference type="InterPro" id="IPR002020">
    <property type="entry name" value="Citrate_synthase"/>
</dbReference>
<dbReference type="InterPro" id="IPR019810">
    <property type="entry name" value="Citrate_synthase_AS"/>
</dbReference>
<dbReference type="InterPro" id="IPR024176">
    <property type="entry name" value="Citrate_synthase_bac-typ"/>
</dbReference>
<dbReference type="InterPro" id="IPR036969">
    <property type="entry name" value="Citrate_synthase_sf"/>
</dbReference>
<dbReference type="InterPro" id="IPR010953">
    <property type="entry name" value="Citrate_synthase_typ-I"/>
</dbReference>
<dbReference type="NCBIfam" id="TIGR01798">
    <property type="entry name" value="cit_synth_I"/>
    <property type="match status" value="1"/>
</dbReference>
<dbReference type="NCBIfam" id="NF004126">
    <property type="entry name" value="PRK05614.1"/>
    <property type="match status" value="1"/>
</dbReference>
<dbReference type="PANTHER" id="PTHR42871">
    <property type="entry name" value="CITRATE SYNTHASE"/>
    <property type="match status" value="1"/>
</dbReference>
<dbReference type="PANTHER" id="PTHR42871:SF1">
    <property type="entry name" value="CITRATE SYNTHASE"/>
    <property type="match status" value="1"/>
</dbReference>
<dbReference type="Pfam" id="PF00285">
    <property type="entry name" value="Citrate_synt"/>
    <property type="match status" value="1"/>
</dbReference>
<dbReference type="PIRSF" id="PIRSF001369">
    <property type="entry name" value="Citrate_synth"/>
    <property type="match status" value="1"/>
</dbReference>
<dbReference type="PRINTS" id="PR00143">
    <property type="entry name" value="CITRTSNTHASE"/>
</dbReference>
<dbReference type="SUPFAM" id="SSF48256">
    <property type="entry name" value="Citrate synthase"/>
    <property type="match status" value="1"/>
</dbReference>
<dbReference type="PROSITE" id="PS00480">
    <property type="entry name" value="CITRATE_SYNTHASE"/>
    <property type="match status" value="1"/>
</dbReference>
<comment type="catalytic activity">
    <reaction evidence="1">
        <text>oxaloacetate + acetyl-CoA + H2O = citrate + CoA + H(+)</text>
        <dbReference type="Rhea" id="RHEA:16845"/>
        <dbReference type="ChEBI" id="CHEBI:15377"/>
        <dbReference type="ChEBI" id="CHEBI:15378"/>
        <dbReference type="ChEBI" id="CHEBI:16452"/>
        <dbReference type="ChEBI" id="CHEBI:16947"/>
        <dbReference type="ChEBI" id="CHEBI:57287"/>
        <dbReference type="ChEBI" id="CHEBI:57288"/>
        <dbReference type="EC" id="2.3.3.16"/>
    </reaction>
</comment>
<comment type="pathway">
    <text>Carbohydrate metabolism; tricarboxylic acid cycle; isocitrate from oxaloacetate: step 1/2.</text>
</comment>
<comment type="subunit">
    <text>Homohexamer.</text>
</comment>
<comment type="miscellaneous">
    <text>Citrate synthase is found in nearly all cells capable of oxidative metabolism.</text>
</comment>
<comment type="similarity">
    <text evidence="2">Belongs to the citrate synthase family.</text>
</comment>
<keyword id="KW-0002">3D-structure</keyword>
<keyword id="KW-0021">Allosteric enzyme</keyword>
<keyword id="KW-0808">Transferase</keyword>
<keyword id="KW-0816">Tricarboxylic acid cycle</keyword>
<gene>
    <name type="primary">aarA</name>
</gene>
<protein>
    <recommendedName>
        <fullName>Citrate synthase</fullName>
        <ecNumber>2.3.3.16</ecNumber>
    </recommendedName>
    <alternativeName>
        <fullName>Acetic acid resistance protein</fullName>
    </alternativeName>
</protein>
<accession>P20901</accession>
<evidence type="ECO:0000255" key="1">
    <source>
        <dbReference type="PROSITE-ProRule" id="PRU10117"/>
    </source>
</evidence>
<evidence type="ECO:0000305" key="2"/>
<evidence type="ECO:0007829" key="3">
    <source>
        <dbReference type="PDB" id="2H12"/>
    </source>
</evidence>
<sequence length="436" mass="48197">MSASQKEGKLSTATISVDGKSAEMPVLSGTLGPDVIDIRKLPAQLGVFTFDPGYGETAACNSKITFIDGDKGVLLHRGYPIAQLDENASYEEVIYLLLNGELPNKVQYDTFTNTLTNHTLLHEQIRNFFNGFRRDAHPMAILCGTVGALSAFYPDANDIAIPANRDLAAMRLIAKIPTIAAWAYKYTQGEAFIYPRNDLNYAENFLSMMFARMSEPYKVNPVLARAMNRILILHADHEQNASTSTVRLAGSTGANPFACIAAGIAALWGPAHGGANEAVLKMLARIGKKENIPAFIAQVKDKNSGVKLMGFGHRVYKNFDPRAKIMQQTCHEVLTELGIKDDPLLDLAVELEKIALSDDYFVQRKLYPNVDFYSGIILKAMGIPTSMFTVLFAVARTTGWVSQWKEMIEEPGQRISRPRQLYIGAPQRDYVPLAKR</sequence>
<proteinExistence type="evidence at protein level"/>
<reference key="1">
    <citation type="journal article" date="1990" name="J. Bacteriol.">
        <title>Cloning of genes responsible for acetic acid resistance in Acetobacter aceti.</title>
        <authorList>
            <person name="Fukaya M."/>
            <person name="Takemura H."/>
            <person name="Okumura H."/>
            <person name="Kawamura Y."/>
            <person name="Horinouchi S."/>
            <person name="Beppu T."/>
        </authorList>
    </citation>
    <scope>NUCLEOTIDE SEQUENCE [GENOMIC DNA]</scope>
</reference>